<name>LRC14_XENLA</name>
<evidence type="ECO:0000250" key="1">
    <source>
        <dbReference type="UniProtKB" id="Q15048"/>
    </source>
</evidence>
<evidence type="ECO:0000250" key="2">
    <source>
        <dbReference type="UniProtKB" id="Q3UWY1"/>
    </source>
</evidence>
<evidence type="ECO:0000305" key="3"/>
<dbReference type="EMBL" id="BC082440">
    <property type="protein sequence ID" value="AAH82440.1"/>
    <property type="molecule type" value="mRNA"/>
</dbReference>
<dbReference type="RefSeq" id="NP_001087894.1">
    <property type="nucleotide sequence ID" value="NM_001094425.1"/>
</dbReference>
<dbReference type="SMR" id="Q640Z9"/>
<dbReference type="DNASU" id="447755"/>
<dbReference type="GeneID" id="447755"/>
<dbReference type="KEGG" id="xla:447755"/>
<dbReference type="AGR" id="Xenbase:XB-GENE-5844993"/>
<dbReference type="CTD" id="447755"/>
<dbReference type="Xenbase" id="XB-GENE-5844993">
    <property type="gene designation" value="lrrc14.L"/>
</dbReference>
<dbReference type="OrthoDB" id="6479713at2759"/>
<dbReference type="Proteomes" id="UP000186698">
    <property type="component" value="Chromosome 6L"/>
</dbReference>
<dbReference type="Bgee" id="447755">
    <property type="expression patterns" value="Expressed in egg cell and 19 other cell types or tissues"/>
</dbReference>
<dbReference type="GO" id="GO:0005737">
    <property type="term" value="C:cytoplasm"/>
    <property type="evidence" value="ECO:0007669"/>
    <property type="project" value="UniProtKB-SubCell"/>
</dbReference>
<dbReference type="FunFam" id="3.80.10.10:FF:000119">
    <property type="entry name" value="Leucine-rich repeat-containing 14 isoform b"/>
    <property type="match status" value="1"/>
</dbReference>
<dbReference type="Gene3D" id="3.80.10.10">
    <property type="entry name" value="Ribonuclease Inhibitor"/>
    <property type="match status" value="1"/>
</dbReference>
<dbReference type="InterPro" id="IPR001611">
    <property type="entry name" value="Leu-rich_rpt"/>
</dbReference>
<dbReference type="InterPro" id="IPR032675">
    <property type="entry name" value="LRR_dom_sf"/>
</dbReference>
<dbReference type="InterPro" id="IPR050694">
    <property type="entry name" value="PRAME_domain"/>
</dbReference>
<dbReference type="PANTHER" id="PTHR14224:SF9">
    <property type="entry name" value="LEUCINE-RICH REPEAT-CONTAINING PROTEIN 14"/>
    <property type="match status" value="1"/>
</dbReference>
<dbReference type="PANTHER" id="PTHR14224">
    <property type="entry name" value="SIMILAR TO PREFERENTIALLY EXPRESSED ANTIGEN IN MELANOMA-LIKE 3"/>
    <property type="match status" value="1"/>
</dbReference>
<dbReference type="Pfam" id="PF13516">
    <property type="entry name" value="LRR_6"/>
    <property type="match status" value="2"/>
</dbReference>
<dbReference type="SUPFAM" id="SSF52047">
    <property type="entry name" value="RNI-like"/>
    <property type="match status" value="1"/>
</dbReference>
<dbReference type="PROSITE" id="PS51450">
    <property type="entry name" value="LRR"/>
    <property type="match status" value="3"/>
</dbReference>
<keyword id="KW-0963">Cytoplasm</keyword>
<keyword id="KW-0433">Leucine-rich repeat</keyword>
<keyword id="KW-1185">Reference proteome</keyword>
<keyword id="KW-0677">Repeat</keyword>
<sequence>MESLVSVCAQKLVCDHSSLRRALDLMPKELYPALFKAAFLGKKTLVLQDLVQTWPFAVLSFHKLLNSNRHCDPQLATEKPSKLCVQTVILGVITYLSDALTKGPEGPQAGRQRLRLLDMTGMQEEGLEQNPDTMSLWSRTVTLAKACIDVSKRHSEEVMQVSKRRRSCHINALPASSPLYIEVRVDLFVNSTSYGVLREALLVSSHSPLRLQCRDFRAEELSLRSTAGLLELLNPGSVRQIDLRFNNLGLSGLNVLLPHMAKFSHLQSLKLPYSNVDVRRLSPVMEEGLQSFASQLGQLGALKELNLGSSRLSGRLRQLLGGLQRPLESLELAFCSLLPMDLSYLSQSSHMSSLRKLDLSGNNLSEFLLTPFLHLLAEISGHLLYLDVMECKLADAHLSALMPILCRCSWLRYLGLFCNPISSDGLRMVLQNLVRLPELHLVVYPFPVDCYSDPTHFSSTAASLDSSFDHEKLTRVGEELQQMLVRAQRMDMVWTTDMYVQRTLDSLSL</sequence>
<accession>Q640Z9</accession>
<feature type="chain" id="PRO_0000344243" description="Leucine-rich repeat-containing protein 14">
    <location>
        <begin position="1"/>
        <end position="509"/>
    </location>
</feature>
<feature type="repeat" description="LRR 1; degenerate" evidence="2">
    <location>
        <begin position="111"/>
        <end position="146"/>
    </location>
</feature>
<feature type="repeat" description="LRR 2; degenerate" evidence="2">
    <location>
        <begin position="210"/>
        <end position="234"/>
    </location>
</feature>
<feature type="repeat" description="LRR 3; degenerate" evidence="2">
    <location>
        <begin position="235"/>
        <end position="262"/>
    </location>
</feature>
<feature type="repeat" description="LRR 4; degenerate" evidence="2">
    <location>
        <begin position="263"/>
        <end position="298"/>
    </location>
</feature>
<feature type="repeat" description="LRR 5" evidence="2">
    <location>
        <begin position="299"/>
        <end position="323"/>
    </location>
</feature>
<feature type="repeat" description="LRR 6" evidence="2">
    <location>
        <begin position="324"/>
        <end position="355"/>
    </location>
</feature>
<feature type="repeat" description="LRR 7" evidence="2">
    <location>
        <begin position="356"/>
        <end position="374"/>
    </location>
</feature>
<feature type="repeat" description="LRR 8" evidence="2">
    <location>
        <begin position="380"/>
        <end position="407"/>
    </location>
</feature>
<feature type="repeat" description="LRR 9" evidence="2">
    <location>
        <begin position="408"/>
        <end position="432"/>
    </location>
</feature>
<gene>
    <name evidence="1" type="primary">lrrc14</name>
</gene>
<organism>
    <name type="scientific">Xenopus laevis</name>
    <name type="common">African clawed frog</name>
    <dbReference type="NCBI Taxonomy" id="8355"/>
    <lineage>
        <taxon>Eukaryota</taxon>
        <taxon>Metazoa</taxon>
        <taxon>Chordata</taxon>
        <taxon>Craniata</taxon>
        <taxon>Vertebrata</taxon>
        <taxon>Euteleostomi</taxon>
        <taxon>Amphibia</taxon>
        <taxon>Batrachia</taxon>
        <taxon>Anura</taxon>
        <taxon>Pipoidea</taxon>
        <taxon>Pipidae</taxon>
        <taxon>Xenopodinae</taxon>
        <taxon>Xenopus</taxon>
        <taxon>Xenopus</taxon>
    </lineage>
</organism>
<proteinExistence type="evidence at transcript level"/>
<comment type="subcellular location">
    <subcellularLocation>
        <location evidence="1">Cytoplasm</location>
    </subcellularLocation>
</comment>
<comment type="similarity">
    <text evidence="3">Belongs to the PRAME family. LRRC14 subfamily.</text>
</comment>
<reference key="1">
    <citation type="submission" date="2004-09" db="EMBL/GenBank/DDBJ databases">
        <authorList>
            <consortium name="NIH - Xenopus Gene Collection (XGC) project"/>
        </authorList>
    </citation>
    <scope>NUCLEOTIDE SEQUENCE [LARGE SCALE MRNA]</scope>
    <source>
        <tissue>Oocyte</tissue>
    </source>
</reference>
<protein>
    <recommendedName>
        <fullName evidence="1">Leucine-rich repeat-containing protein 14</fullName>
    </recommendedName>
</protein>